<name>SYDP_CITK8</name>
<evidence type="ECO:0000255" key="1">
    <source>
        <dbReference type="HAMAP-Rule" id="MF_01104"/>
    </source>
</evidence>
<sequence length="181" mass="20319">MDELTSQALTAFTTRYCDAWHEKHNSWPLSEELYGVPSPCIISSTSDAVYWQPQPFEGEANVNAVESAFDIVIQSAVHAFYTTQFAGDMYAQFADEKLTLLQTWSADDFRRVQENLIGHLVTQKRLKLPPTLFIATLENELEVISVCNLSGEVCKETLGTRNRTVLAASLAEFLTQLKPLL</sequence>
<accession>A8AP01</accession>
<organism>
    <name type="scientific">Citrobacter koseri (strain ATCC BAA-895 / CDC 4225-83 / SGSC4696)</name>
    <dbReference type="NCBI Taxonomy" id="290338"/>
    <lineage>
        <taxon>Bacteria</taxon>
        <taxon>Pseudomonadati</taxon>
        <taxon>Pseudomonadota</taxon>
        <taxon>Gammaproteobacteria</taxon>
        <taxon>Enterobacterales</taxon>
        <taxon>Enterobacteriaceae</taxon>
        <taxon>Citrobacter</taxon>
    </lineage>
</organism>
<reference key="1">
    <citation type="submission" date="2007-08" db="EMBL/GenBank/DDBJ databases">
        <authorList>
            <consortium name="The Citrobacter koseri Genome Sequencing Project"/>
            <person name="McClelland M."/>
            <person name="Sanderson E.K."/>
            <person name="Porwollik S."/>
            <person name="Spieth J."/>
            <person name="Clifton W.S."/>
            <person name="Latreille P."/>
            <person name="Courtney L."/>
            <person name="Wang C."/>
            <person name="Pepin K."/>
            <person name="Bhonagiri V."/>
            <person name="Nash W."/>
            <person name="Johnson M."/>
            <person name="Thiruvilangam P."/>
            <person name="Wilson R."/>
        </authorList>
    </citation>
    <scope>NUCLEOTIDE SEQUENCE [LARGE SCALE GENOMIC DNA]</scope>
    <source>
        <strain>ATCC BAA-895 / CDC 4225-83 / SGSC4696</strain>
    </source>
</reference>
<dbReference type="EMBL" id="CP000822">
    <property type="protein sequence ID" value="ABV15214.1"/>
    <property type="molecule type" value="Genomic_DNA"/>
</dbReference>
<dbReference type="RefSeq" id="WP_012134903.1">
    <property type="nucleotide sequence ID" value="NC_009792.1"/>
</dbReference>
<dbReference type="SMR" id="A8AP01"/>
<dbReference type="STRING" id="290338.CKO_04149"/>
<dbReference type="GeneID" id="45137780"/>
<dbReference type="KEGG" id="cko:CKO_04149"/>
<dbReference type="HOGENOM" id="CLU_121866_0_0_6"/>
<dbReference type="OrthoDB" id="5599437at2"/>
<dbReference type="Proteomes" id="UP000008148">
    <property type="component" value="Chromosome"/>
</dbReference>
<dbReference type="GO" id="GO:0009898">
    <property type="term" value="C:cytoplasmic side of plasma membrane"/>
    <property type="evidence" value="ECO:0007669"/>
    <property type="project" value="InterPro"/>
</dbReference>
<dbReference type="CDD" id="cd16323">
    <property type="entry name" value="Syd"/>
    <property type="match status" value="1"/>
</dbReference>
<dbReference type="Gene3D" id="3.40.1580.20">
    <property type="entry name" value="Syd protein"/>
    <property type="match status" value="1"/>
</dbReference>
<dbReference type="HAMAP" id="MF_01104">
    <property type="entry name" value="Syd"/>
    <property type="match status" value="1"/>
</dbReference>
<dbReference type="InterPro" id="IPR009948">
    <property type="entry name" value="Syd"/>
</dbReference>
<dbReference type="InterPro" id="IPR038228">
    <property type="entry name" value="Syd_sf"/>
</dbReference>
<dbReference type="NCBIfam" id="NF003439">
    <property type="entry name" value="PRK04968.1"/>
    <property type="match status" value="1"/>
</dbReference>
<dbReference type="Pfam" id="PF07348">
    <property type="entry name" value="Syd"/>
    <property type="match status" value="1"/>
</dbReference>
<keyword id="KW-0997">Cell inner membrane</keyword>
<keyword id="KW-1003">Cell membrane</keyword>
<keyword id="KW-0472">Membrane</keyword>
<keyword id="KW-1185">Reference proteome</keyword>
<comment type="function">
    <text evidence="1">Interacts with the SecY protein in vivo. May bind preferentially to an uncomplexed state of SecY, thus functioning either as a chelating agent for excess SecY in the cell or as a regulatory factor that negatively controls the translocase function.</text>
</comment>
<comment type="subcellular location">
    <subcellularLocation>
        <location evidence="1">Cell inner membrane</location>
        <topology evidence="1">Peripheral membrane protein</topology>
        <orientation evidence="1">Cytoplasmic side</orientation>
    </subcellularLocation>
    <text evidence="1">Loosely associated with the cytoplasmic side of the inner membrane, probably via SecY.</text>
</comment>
<comment type="similarity">
    <text evidence="1">Belongs to the Syd family.</text>
</comment>
<protein>
    <recommendedName>
        <fullName evidence="1">Protein Syd</fullName>
    </recommendedName>
</protein>
<feature type="chain" id="PRO_1000065037" description="Protein Syd">
    <location>
        <begin position="1"/>
        <end position="181"/>
    </location>
</feature>
<gene>
    <name evidence="1" type="primary">syd</name>
    <name type="ordered locus">CKO_04149</name>
</gene>
<proteinExistence type="inferred from homology"/>